<accession>Q5WKF5</accession>
<keyword id="KW-0963">Cytoplasm</keyword>
<keyword id="KW-0408">Iron</keyword>
<keyword id="KW-0411">Iron-sulfur</keyword>
<keyword id="KW-0479">Metal-binding</keyword>
<keyword id="KW-0560">Oxidoreductase</keyword>
<keyword id="KW-1185">Reference proteome</keyword>
<proteinExistence type="inferred from homology"/>
<dbReference type="EC" id="1.8.4.10" evidence="1"/>
<dbReference type="EMBL" id="AP006627">
    <property type="protein sequence ID" value="BAD63150.1"/>
    <property type="molecule type" value="Genomic_DNA"/>
</dbReference>
<dbReference type="SMR" id="Q5WKF5"/>
<dbReference type="STRING" id="66692.ABC0611"/>
<dbReference type="KEGG" id="bcl:ABC0611"/>
<dbReference type="eggNOG" id="COG0175">
    <property type="taxonomic scope" value="Bacteria"/>
</dbReference>
<dbReference type="HOGENOM" id="CLU_044089_2_1_9"/>
<dbReference type="OrthoDB" id="9772604at2"/>
<dbReference type="Proteomes" id="UP000001168">
    <property type="component" value="Chromosome"/>
</dbReference>
<dbReference type="GO" id="GO:0005737">
    <property type="term" value="C:cytoplasm"/>
    <property type="evidence" value="ECO:0007669"/>
    <property type="project" value="UniProtKB-SubCell"/>
</dbReference>
<dbReference type="GO" id="GO:0051539">
    <property type="term" value="F:4 iron, 4 sulfur cluster binding"/>
    <property type="evidence" value="ECO:0007669"/>
    <property type="project" value="UniProtKB-UniRule"/>
</dbReference>
<dbReference type="GO" id="GO:0043866">
    <property type="term" value="F:adenylyl-sulfate reductase (thioredoxin) activity"/>
    <property type="evidence" value="ECO:0007669"/>
    <property type="project" value="UniProtKB-EC"/>
</dbReference>
<dbReference type="GO" id="GO:0046872">
    <property type="term" value="F:metal ion binding"/>
    <property type="evidence" value="ECO:0007669"/>
    <property type="project" value="UniProtKB-KW"/>
</dbReference>
<dbReference type="GO" id="GO:0004604">
    <property type="term" value="F:phosphoadenylyl-sulfate reductase (thioredoxin) activity"/>
    <property type="evidence" value="ECO:0007669"/>
    <property type="project" value="UniProtKB-UniRule"/>
</dbReference>
<dbReference type="GO" id="GO:0019344">
    <property type="term" value="P:cysteine biosynthetic process"/>
    <property type="evidence" value="ECO:0007669"/>
    <property type="project" value="InterPro"/>
</dbReference>
<dbReference type="GO" id="GO:0070814">
    <property type="term" value="P:hydrogen sulfide biosynthetic process"/>
    <property type="evidence" value="ECO:0007669"/>
    <property type="project" value="UniProtKB-UniRule"/>
</dbReference>
<dbReference type="GO" id="GO:0019379">
    <property type="term" value="P:sulfate assimilation, phosphoadenylyl sulfate reduction by phosphoadenylyl-sulfate reductase (thioredoxin)"/>
    <property type="evidence" value="ECO:0007669"/>
    <property type="project" value="UniProtKB-UniRule"/>
</dbReference>
<dbReference type="CDD" id="cd23945">
    <property type="entry name" value="PAPS_reductase"/>
    <property type="match status" value="1"/>
</dbReference>
<dbReference type="Gene3D" id="3.40.50.620">
    <property type="entry name" value="HUPs"/>
    <property type="match status" value="1"/>
</dbReference>
<dbReference type="HAMAP" id="MF_00063">
    <property type="entry name" value="CysH"/>
    <property type="match status" value="1"/>
</dbReference>
<dbReference type="InterPro" id="IPR011798">
    <property type="entry name" value="APS_reductase"/>
</dbReference>
<dbReference type="InterPro" id="IPR004511">
    <property type="entry name" value="PAPS/APS_Rdtase"/>
</dbReference>
<dbReference type="InterPro" id="IPR002500">
    <property type="entry name" value="PAPS_reduct_dom"/>
</dbReference>
<dbReference type="InterPro" id="IPR014729">
    <property type="entry name" value="Rossmann-like_a/b/a_fold"/>
</dbReference>
<dbReference type="NCBIfam" id="TIGR02055">
    <property type="entry name" value="APS_reductase"/>
    <property type="match status" value="1"/>
</dbReference>
<dbReference type="NCBIfam" id="TIGR00434">
    <property type="entry name" value="cysH"/>
    <property type="match status" value="1"/>
</dbReference>
<dbReference type="NCBIfam" id="NF002537">
    <property type="entry name" value="PRK02090.1"/>
    <property type="match status" value="1"/>
</dbReference>
<dbReference type="PANTHER" id="PTHR46509">
    <property type="entry name" value="PHOSPHOADENOSINE PHOSPHOSULFATE REDUCTASE"/>
    <property type="match status" value="1"/>
</dbReference>
<dbReference type="PANTHER" id="PTHR46509:SF1">
    <property type="entry name" value="PHOSPHOADENOSINE PHOSPHOSULFATE REDUCTASE"/>
    <property type="match status" value="1"/>
</dbReference>
<dbReference type="Pfam" id="PF01507">
    <property type="entry name" value="PAPS_reduct"/>
    <property type="match status" value="1"/>
</dbReference>
<dbReference type="PIRSF" id="PIRSF000857">
    <property type="entry name" value="PAPS_reductase"/>
    <property type="match status" value="1"/>
</dbReference>
<dbReference type="SUPFAM" id="SSF52402">
    <property type="entry name" value="Adenine nucleotide alpha hydrolases-like"/>
    <property type="match status" value="1"/>
</dbReference>
<reference key="1">
    <citation type="submission" date="2003-10" db="EMBL/GenBank/DDBJ databases">
        <title>The complete genome sequence of the alkaliphilic Bacillus clausii KSM-K16.</title>
        <authorList>
            <person name="Takaki Y."/>
            <person name="Kageyama Y."/>
            <person name="Shimamura S."/>
            <person name="Suzuki H."/>
            <person name="Nishi S."/>
            <person name="Hatada Y."/>
            <person name="Kawai S."/>
            <person name="Ito S."/>
            <person name="Horikoshi K."/>
        </authorList>
    </citation>
    <scope>NUCLEOTIDE SEQUENCE [LARGE SCALE GENOMIC DNA]</scope>
    <source>
        <strain>KSM-K16</strain>
    </source>
</reference>
<name>CYSH_SHOC1</name>
<gene>
    <name evidence="1" type="primary">cysH</name>
    <name type="ordered locus">ABC0611</name>
</gene>
<sequence length="241" mass="28151">MAYVFEQMEATDYEKVNTKLKNRDSLDILRWANQTYGEKLVYACSFGAEAMVLLDLLSKIQKEAHILFLDTDFHFAETYELIERVKERYPTFRINMAKPALSPEEQAERYGDELWLKNPDQCCQIRKLDVLARELEPYDAWLSGLRREQSPTRANTEFVNQDKRFKKVKVCPLIHWTEEEIWMYIKLHQLPYNELHDQHYPSIGCTYCTKAVMPGEDARSGRWAGTGKTECGLHAPTKGDS</sequence>
<protein>
    <recommendedName>
        <fullName evidence="1">Adenosine 5'-phosphosulfate reductase</fullName>
        <shortName evidence="1">APS reductase</shortName>
        <ecNumber evidence="1">1.8.4.10</ecNumber>
    </recommendedName>
    <alternativeName>
        <fullName evidence="1">5'-adenylylsulfate reductase</fullName>
    </alternativeName>
    <alternativeName>
        <fullName evidence="1">Thioredoxin-dependent 5'-adenylylsulfate reductase</fullName>
    </alternativeName>
</protein>
<evidence type="ECO:0000255" key="1">
    <source>
        <dbReference type="HAMAP-Rule" id="MF_00063"/>
    </source>
</evidence>
<feature type="chain" id="PRO_1000075070" description="Adenosine 5'-phosphosulfate reductase">
    <location>
        <begin position="1"/>
        <end position="241"/>
    </location>
</feature>
<feature type="active site" description="Nucleophile; cysteine thiosulfonate intermediate" evidence="1">
    <location>
        <position position="231"/>
    </location>
</feature>
<feature type="binding site" evidence="1">
    <location>
        <position position="122"/>
    </location>
    <ligand>
        <name>[4Fe-4S] cluster</name>
        <dbReference type="ChEBI" id="CHEBI:49883"/>
    </ligand>
</feature>
<feature type="binding site" evidence="1">
    <location>
        <position position="123"/>
    </location>
    <ligand>
        <name>[4Fe-4S] cluster</name>
        <dbReference type="ChEBI" id="CHEBI:49883"/>
    </ligand>
</feature>
<feature type="binding site" evidence="1">
    <location>
        <position position="205"/>
    </location>
    <ligand>
        <name>[4Fe-4S] cluster</name>
        <dbReference type="ChEBI" id="CHEBI:49883"/>
    </ligand>
</feature>
<feature type="binding site" evidence="1">
    <location>
        <position position="208"/>
    </location>
    <ligand>
        <name>[4Fe-4S] cluster</name>
        <dbReference type="ChEBI" id="CHEBI:49883"/>
    </ligand>
</feature>
<organism>
    <name type="scientific">Shouchella clausii (strain KSM-K16)</name>
    <name type="common">Alkalihalobacillus clausii</name>
    <dbReference type="NCBI Taxonomy" id="66692"/>
    <lineage>
        <taxon>Bacteria</taxon>
        <taxon>Bacillati</taxon>
        <taxon>Bacillota</taxon>
        <taxon>Bacilli</taxon>
        <taxon>Bacillales</taxon>
        <taxon>Bacillaceae</taxon>
        <taxon>Shouchella</taxon>
    </lineage>
</organism>
<comment type="function">
    <text evidence="1">Catalyzes the formation of sulfite from adenosine 5'-phosphosulfate (APS) using thioredoxin as an electron donor.</text>
</comment>
<comment type="catalytic activity">
    <reaction evidence="1">
        <text>[thioredoxin]-disulfide + sulfite + AMP + 2 H(+) = adenosine 5'-phosphosulfate + [thioredoxin]-dithiol</text>
        <dbReference type="Rhea" id="RHEA:21976"/>
        <dbReference type="Rhea" id="RHEA-COMP:10698"/>
        <dbReference type="Rhea" id="RHEA-COMP:10700"/>
        <dbReference type="ChEBI" id="CHEBI:15378"/>
        <dbReference type="ChEBI" id="CHEBI:17359"/>
        <dbReference type="ChEBI" id="CHEBI:29950"/>
        <dbReference type="ChEBI" id="CHEBI:50058"/>
        <dbReference type="ChEBI" id="CHEBI:58243"/>
        <dbReference type="ChEBI" id="CHEBI:456215"/>
        <dbReference type="EC" id="1.8.4.10"/>
    </reaction>
</comment>
<comment type="cofactor">
    <cofactor evidence="1">
        <name>[4Fe-4S] cluster</name>
        <dbReference type="ChEBI" id="CHEBI:49883"/>
    </cofactor>
    <text evidence="1">Binds 1 [4Fe-4S] cluster per subunit.</text>
</comment>
<comment type="pathway">
    <text evidence="1">Sulfur metabolism; hydrogen sulfide biosynthesis; sulfite from sulfate.</text>
</comment>
<comment type="subcellular location">
    <subcellularLocation>
        <location evidence="1">Cytoplasm</location>
    </subcellularLocation>
</comment>
<comment type="similarity">
    <text evidence="1">Belongs to the PAPS reductase family. CysH subfamily.</text>
</comment>